<accession>Q5HX28</accession>
<feature type="chain" id="PRO_0000229229" description="Ribosome maturation factor RimP">
    <location>
        <begin position="1"/>
        <end position="140"/>
    </location>
</feature>
<protein>
    <recommendedName>
        <fullName evidence="1">Ribosome maturation factor RimP</fullName>
    </recommendedName>
</protein>
<proteinExistence type="inferred from homology"/>
<organism>
    <name type="scientific">Campylobacter jejuni (strain RM1221)</name>
    <dbReference type="NCBI Taxonomy" id="195099"/>
    <lineage>
        <taxon>Bacteria</taxon>
        <taxon>Pseudomonadati</taxon>
        <taxon>Campylobacterota</taxon>
        <taxon>Epsilonproteobacteria</taxon>
        <taxon>Campylobacterales</taxon>
        <taxon>Campylobacteraceae</taxon>
        <taxon>Campylobacter</taxon>
    </lineage>
</organism>
<gene>
    <name evidence="1" type="primary">rimP</name>
    <name type="ordered locus">CJE0133</name>
</gene>
<comment type="function">
    <text evidence="1">Required for maturation of 30S ribosomal subunits.</text>
</comment>
<comment type="subcellular location">
    <subcellularLocation>
        <location evidence="1">Cytoplasm</location>
    </subcellularLocation>
</comment>
<comment type="similarity">
    <text evidence="1">Belongs to the RimP family.</text>
</comment>
<dbReference type="EMBL" id="CP000025">
    <property type="protein sequence ID" value="AAW34728.1"/>
    <property type="molecule type" value="Genomic_DNA"/>
</dbReference>
<dbReference type="RefSeq" id="WP_002800873.1">
    <property type="nucleotide sequence ID" value="NC_003912.7"/>
</dbReference>
<dbReference type="SMR" id="Q5HX28"/>
<dbReference type="KEGG" id="cjr:CJE0133"/>
<dbReference type="HOGENOM" id="CLU_070525_2_2_7"/>
<dbReference type="GO" id="GO:0005829">
    <property type="term" value="C:cytosol"/>
    <property type="evidence" value="ECO:0007669"/>
    <property type="project" value="TreeGrafter"/>
</dbReference>
<dbReference type="GO" id="GO:0000028">
    <property type="term" value="P:ribosomal small subunit assembly"/>
    <property type="evidence" value="ECO:0007669"/>
    <property type="project" value="TreeGrafter"/>
</dbReference>
<dbReference type="GO" id="GO:0006412">
    <property type="term" value="P:translation"/>
    <property type="evidence" value="ECO:0007669"/>
    <property type="project" value="TreeGrafter"/>
</dbReference>
<dbReference type="CDD" id="cd01734">
    <property type="entry name" value="YlxS_C"/>
    <property type="match status" value="1"/>
</dbReference>
<dbReference type="Gene3D" id="2.30.30.180">
    <property type="entry name" value="Ribosome maturation factor RimP, C-terminal domain"/>
    <property type="match status" value="1"/>
</dbReference>
<dbReference type="Gene3D" id="3.30.300.70">
    <property type="entry name" value="RimP-like superfamily, N-terminal"/>
    <property type="match status" value="1"/>
</dbReference>
<dbReference type="HAMAP" id="MF_01077">
    <property type="entry name" value="RimP"/>
    <property type="match status" value="1"/>
</dbReference>
<dbReference type="InterPro" id="IPR003728">
    <property type="entry name" value="Ribosome_maturation_RimP"/>
</dbReference>
<dbReference type="InterPro" id="IPR028998">
    <property type="entry name" value="RimP_C"/>
</dbReference>
<dbReference type="InterPro" id="IPR036847">
    <property type="entry name" value="RimP_C_sf"/>
</dbReference>
<dbReference type="InterPro" id="IPR028989">
    <property type="entry name" value="RimP_N"/>
</dbReference>
<dbReference type="InterPro" id="IPR035956">
    <property type="entry name" value="RimP_N_sf"/>
</dbReference>
<dbReference type="NCBIfam" id="NF011232">
    <property type="entry name" value="PRK14639.1"/>
    <property type="match status" value="1"/>
</dbReference>
<dbReference type="PANTHER" id="PTHR33867">
    <property type="entry name" value="RIBOSOME MATURATION FACTOR RIMP"/>
    <property type="match status" value="1"/>
</dbReference>
<dbReference type="PANTHER" id="PTHR33867:SF1">
    <property type="entry name" value="RIBOSOME MATURATION FACTOR RIMP"/>
    <property type="match status" value="1"/>
</dbReference>
<dbReference type="Pfam" id="PF17384">
    <property type="entry name" value="DUF150_C"/>
    <property type="match status" value="1"/>
</dbReference>
<dbReference type="Pfam" id="PF02576">
    <property type="entry name" value="RimP_N"/>
    <property type="match status" value="1"/>
</dbReference>
<dbReference type="SUPFAM" id="SSF74942">
    <property type="entry name" value="YhbC-like, C-terminal domain"/>
    <property type="match status" value="1"/>
</dbReference>
<dbReference type="SUPFAM" id="SSF75420">
    <property type="entry name" value="YhbC-like, N-terminal domain"/>
    <property type="match status" value="1"/>
</dbReference>
<reference key="1">
    <citation type="journal article" date="2005" name="PLoS Biol.">
        <title>Major structural differences and novel potential virulence mechanisms from the genomes of multiple Campylobacter species.</title>
        <authorList>
            <person name="Fouts D.E."/>
            <person name="Mongodin E.F."/>
            <person name="Mandrell R.E."/>
            <person name="Miller W.G."/>
            <person name="Rasko D.A."/>
            <person name="Ravel J."/>
            <person name="Brinkac L.M."/>
            <person name="DeBoy R.T."/>
            <person name="Parker C.T."/>
            <person name="Daugherty S.C."/>
            <person name="Dodson R.J."/>
            <person name="Durkin A.S."/>
            <person name="Madupu R."/>
            <person name="Sullivan S.A."/>
            <person name="Shetty J.U."/>
            <person name="Ayodeji M.A."/>
            <person name="Shvartsbeyn A."/>
            <person name="Schatz M.C."/>
            <person name="Badger J.H."/>
            <person name="Fraser C.M."/>
            <person name="Nelson K.E."/>
        </authorList>
    </citation>
    <scope>NUCLEOTIDE SEQUENCE [LARGE SCALE GENOMIC DNA]</scope>
    <source>
        <strain>RM1221</strain>
    </source>
</reference>
<sequence>MNLEALCKEAGLSFYDDELVSENGRKIYRIYVQKEGGVNLDDCARLSEILSPIFDVESPVNGEYFLEVSSPGLERKLSKIEHFAKSIGELVKITTNEKEKFEAKIIAVDDENITLENLENKEKTTINFNDIKKARTFVEW</sequence>
<evidence type="ECO:0000255" key="1">
    <source>
        <dbReference type="HAMAP-Rule" id="MF_01077"/>
    </source>
</evidence>
<keyword id="KW-0963">Cytoplasm</keyword>
<keyword id="KW-0690">Ribosome biogenesis</keyword>
<name>RIMP_CAMJR</name>